<sequence>MQPTLLLSLLGAVGLAAVNSMPVDNRNHNEGMVTRCIIEVLSNALSKSSAPPITPECRQVLKTSRKDVKDKETTENENTKFEVRLLRDPADASEAHESSSRGEAGAPGEEDIQGPTKADTEKWAEGGGHSRERADEPQWSLYPSDSQVSEEVKTRHSEKSQREDEEEEEGENYQKGERGEDSSEEKHLEEPGETQNAFLNERKQASAIKKEELVARSETHAAGHSQEKTHSREKSSQESGEETGSQENHPQESKGQPRSQEESEEGEEDATSEVDKRRTRPRHHHGRSRPDRSSQGGSLPSEEKGHPQEESEESNVSMASLGEKRDHHSTHYRASEEEPEYGEEIKGYPGVQAPEDLEWERYRGRGSEEYRAPRPQSEESWDEEDKRNYPSLELDKMAHGYGEESEEERGLEPGKGRHHRGRGGEPRAYFMSDTREEKRFLGEGHHRVQENQMDKARRHPQGAWKELDRNYLNYGEEGAPGKWQQQGDLQDTKENREEARFQDKQYSSHHTAEKRKRLGELFNPYYDPLQWKSSHFERRDNMNDNFLEGEEENELTLNEKNFFPEYNYDWWEKKPFSEDVNWGYEKRNLARVPKLDLKRQYDRVAQLDQLLHYRKKSAEFPDFYDSEEPVSTHQEAENEKDRADQTVLTEDEKKELENLAAMDLELQKIAEKFSQRG</sequence>
<name>SCG1_HUMAN</name>
<reference key="1">
    <citation type="journal article" date="1987" name="EMBO J.">
        <title>The primary structure of human secretogranin I (chromogranin B): comparison with chromogranin A reveals homologous terminal domains and a large intervening variable region.</title>
        <authorList>
            <person name="Benedum U.M."/>
            <person name="Lamouroux A."/>
            <person name="Konecki D.S."/>
            <person name="Hille A."/>
            <person name="Baeuerle P.A."/>
            <person name="Frank R."/>
            <person name="Lottspeich F."/>
            <person name="Mallet J."/>
            <person name="Huttner W.B."/>
        </authorList>
    </citation>
    <scope>NUCLEOTIDE SEQUENCE [MRNA]</scope>
    <scope>PROTEIN SEQUENCE OF 21-34; 85-93; 334-340 AND 347-355</scope>
    <scope>TISSUE SPECIFICITY</scope>
    <scope>VARIANT ALA-243</scope>
    <source>
        <tissue>Adrenal medulla</tissue>
    </source>
</reference>
<reference key="2">
    <citation type="journal article" date="2004" name="Nat. Genet.">
        <title>Complete sequencing and characterization of 21,243 full-length human cDNAs.</title>
        <authorList>
            <person name="Ota T."/>
            <person name="Suzuki Y."/>
            <person name="Nishikawa T."/>
            <person name="Otsuki T."/>
            <person name="Sugiyama T."/>
            <person name="Irie R."/>
            <person name="Wakamatsu A."/>
            <person name="Hayashi K."/>
            <person name="Sato H."/>
            <person name="Nagai K."/>
            <person name="Kimura K."/>
            <person name="Makita H."/>
            <person name="Sekine M."/>
            <person name="Obayashi M."/>
            <person name="Nishi T."/>
            <person name="Shibahara T."/>
            <person name="Tanaka T."/>
            <person name="Ishii S."/>
            <person name="Yamamoto J."/>
            <person name="Saito K."/>
            <person name="Kawai Y."/>
            <person name="Isono Y."/>
            <person name="Nakamura Y."/>
            <person name="Nagahari K."/>
            <person name="Murakami K."/>
            <person name="Yasuda T."/>
            <person name="Iwayanagi T."/>
            <person name="Wagatsuma M."/>
            <person name="Shiratori A."/>
            <person name="Sudo H."/>
            <person name="Hosoiri T."/>
            <person name="Kaku Y."/>
            <person name="Kodaira H."/>
            <person name="Kondo H."/>
            <person name="Sugawara M."/>
            <person name="Takahashi M."/>
            <person name="Kanda K."/>
            <person name="Yokoi T."/>
            <person name="Furuya T."/>
            <person name="Kikkawa E."/>
            <person name="Omura Y."/>
            <person name="Abe K."/>
            <person name="Kamihara K."/>
            <person name="Katsuta N."/>
            <person name="Sato K."/>
            <person name="Tanikawa M."/>
            <person name="Yamazaki M."/>
            <person name="Ninomiya K."/>
            <person name="Ishibashi T."/>
            <person name="Yamashita H."/>
            <person name="Murakawa K."/>
            <person name="Fujimori K."/>
            <person name="Tanai H."/>
            <person name="Kimata M."/>
            <person name="Watanabe M."/>
            <person name="Hiraoka S."/>
            <person name="Chiba Y."/>
            <person name="Ishida S."/>
            <person name="Ono Y."/>
            <person name="Takiguchi S."/>
            <person name="Watanabe S."/>
            <person name="Yosida M."/>
            <person name="Hotuta T."/>
            <person name="Kusano J."/>
            <person name="Kanehori K."/>
            <person name="Takahashi-Fujii A."/>
            <person name="Hara H."/>
            <person name="Tanase T.-O."/>
            <person name="Nomura Y."/>
            <person name="Togiya S."/>
            <person name="Komai F."/>
            <person name="Hara R."/>
            <person name="Takeuchi K."/>
            <person name="Arita M."/>
            <person name="Imose N."/>
            <person name="Musashino K."/>
            <person name="Yuuki H."/>
            <person name="Oshima A."/>
            <person name="Sasaki N."/>
            <person name="Aotsuka S."/>
            <person name="Yoshikawa Y."/>
            <person name="Matsunawa H."/>
            <person name="Ichihara T."/>
            <person name="Shiohata N."/>
            <person name="Sano S."/>
            <person name="Moriya S."/>
            <person name="Momiyama H."/>
            <person name="Satoh N."/>
            <person name="Takami S."/>
            <person name="Terashima Y."/>
            <person name="Suzuki O."/>
            <person name="Nakagawa S."/>
            <person name="Senoh A."/>
            <person name="Mizoguchi H."/>
            <person name="Goto Y."/>
            <person name="Shimizu F."/>
            <person name="Wakebe H."/>
            <person name="Hishigaki H."/>
            <person name="Watanabe T."/>
            <person name="Sugiyama A."/>
            <person name="Takemoto M."/>
            <person name="Kawakami B."/>
            <person name="Yamazaki M."/>
            <person name="Watanabe K."/>
            <person name="Kumagai A."/>
            <person name="Itakura S."/>
            <person name="Fukuzumi Y."/>
            <person name="Fujimori Y."/>
            <person name="Komiyama M."/>
            <person name="Tashiro H."/>
            <person name="Tanigami A."/>
            <person name="Fujiwara T."/>
            <person name="Ono T."/>
            <person name="Yamada K."/>
            <person name="Fujii Y."/>
            <person name="Ozaki K."/>
            <person name="Hirao M."/>
            <person name="Ohmori Y."/>
            <person name="Kawabata A."/>
            <person name="Hikiji T."/>
            <person name="Kobatake N."/>
            <person name="Inagaki H."/>
            <person name="Ikema Y."/>
            <person name="Okamoto S."/>
            <person name="Okitani R."/>
            <person name="Kawakami T."/>
            <person name="Noguchi S."/>
            <person name="Itoh T."/>
            <person name="Shigeta K."/>
            <person name="Senba T."/>
            <person name="Matsumura K."/>
            <person name="Nakajima Y."/>
            <person name="Mizuno T."/>
            <person name="Morinaga M."/>
            <person name="Sasaki M."/>
            <person name="Togashi T."/>
            <person name="Oyama M."/>
            <person name="Hata H."/>
            <person name="Watanabe M."/>
            <person name="Komatsu T."/>
            <person name="Mizushima-Sugano J."/>
            <person name="Satoh T."/>
            <person name="Shirai Y."/>
            <person name="Takahashi Y."/>
            <person name="Nakagawa K."/>
            <person name="Okumura K."/>
            <person name="Nagase T."/>
            <person name="Nomura N."/>
            <person name="Kikuchi H."/>
            <person name="Masuho Y."/>
            <person name="Yamashita R."/>
            <person name="Nakai K."/>
            <person name="Yada T."/>
            <person name="Nakamura Y."/>
            <person name="Ohara O."/>
            <person name="Isogai T."/>
            <person name="Sugano S."/>
        </authorList>
    </citation>
    <scope>NUCLEOTIDE SEQUENCE [LARGE SCALE MRNA]</scope>
    <scope>VARIANTS THR-93; GLN-178; ALA-243; GLY-353 AND HIS-417</scope>
    <source>
        <tissue>Adrenal gland</tissue>
    </source>
</reference>
<reference key="3">
    <citation type="submission" date="2004-06" db="EMBL/GenBank/DDBJ databases">
        <title>Cloning of human full open reading frames in Gateway(TM) system entry vector (pDONR201).</title>
        <authorList>
            <person name="Ebert L."/>
            <person name="Schick M."/>
            <person name="Neubert P."/>
            <person name="Schatten R."/>
            <person name="Henze S."/>
            <person name="Korn B."/>
        </authorList>
    </citation>
    <scope>NUCLEOTIDE SEQUENCE [LARGE SCALE MRNA]</scope>
    <scope>VARIANT ALA-243</scope>
</reference>
<reference key="4">
    <citation type="submission" date="2005-03" db="EMBL/GenBank/DDBJ databases">
        <authorList>
            <person name="Totoki Y."/>
            <person name="Toyoda A."/>
            <person name="Takeda T."/>
            <person name="Sakaki Y."/>
            <person name="Tanaka A."/>
            <person name="Yokoyama S."/>
            <person name="Ohara O."/>
            <person name="Nagase T."/>
            <person name="Kikuno R.F."/>
        </authorList>
    </citation>
    <scope>NUCLEOTIDE SEQUENCE [LARGE SCALE MRNA]</scope>
    <scope>VARIANTS THR-93; GLN-178; ALA-243; GLY-353 AND HIS-417</scope>
    <source>
        <tissue>Brain</tissue>
    </source>
</reference>
<reference key="5">
    <citation type="journal article" date="2001" name="Nature">
        <title>The DNA sequence and comparative analysis of human chromosome 20.</title>
        <authorList>
            <person name="Deloukas P."/>
            <person name="Matthews L.H."/>
            <person name="Ashurst J.L."/>
            <person name="Burton J."/>
            <person name="Gilbert J.G.R."/>
            <person name="Jones M."/>
            <person name="Stavrides G."/>
            <person name="Almeida J.P."/>
            <person name="Babbage A.K."/>
            <person name="Bagguley C.L."/>
            <person name="Bailey J."/>
            <person name="Barlow K.F."/>
            <person name="Bates K.N."/>
            <person name="Beard L.M."/>
            <person name="Beare D.M."/>
            <person name="Beasley O.P."/>
            <person name="Bird C.P."/>
            <person name="Blakey S.E."/>
            <person name="Bridgeman A.M."/>
            <person name="Brown A.J."/>
            <person name="Buck D."/>
            <person name="Burrill W.D."/>
            <person name="Butler A.P."/>
            <person name="Carder C."/>
            <person name="Carter N.P."/>
            <person name="Chapman J.C."/>
            <person name="Clamp M."/>
            <person name="Clark G."/>
            <person name="Clark L.N."/>
            <person name="Clark S.Y."/>
            <person name="Clee C.M."/>
            <person name="Clegg S."/>
            <person name="Cobley V.E."/>
            <person name="Collier R.E."/>
            <person name="Connor R.E."/>
            <person name="Corby N.R."/>
            <person name="Coulson A."/>
            <person name="Coville G.J."/>
            <person name="Deadman R."/>
            <person name="Dhami P.D."/>
            <person name="Dunn M."/>
            <person name="Ellington A.G."/>
            <person name="Frankland J.A."/>
            <person name="Fraser A."/>
            <person name="French L."/>
            <person name="Garner P."/>
            <person name="Grafham D.V."/>
            <person name="Griffiths C."/>
            <person name="Griffiths M.N.D."/>
            <person name="Gwilliam R."/>
            <person name="Hall R.E."/>
            <person name="Hammond S."/>
            <person name="Harley J.L."/>
            <person name="Heath P.D."/>
            <person name="Ho S."/>
            <person name="Holden J.L."/>
            <person name="Howden P.J."/>
            <person name="Huckle E."/>
            <person name="Hunt A.R."/>
            <person name="Hunt S.E."/>
            <person name="Jekosch K."/>
            <person name="Johnson C.M."/>
            <person name="Johnson D."/>
            <person name="Kay M.P."/>
            <person name="Kimberley A.M."/>
            <person name="King A."/>
            <person name="Knights A."/>
            <person name="Laird G.K."/>
            <person name="Lawlor S."/>
            <person name="Lehvaeslaiho M.H."/>
            <person name="Leversha M.A."/>
            <person name="Lloyd C."/>
            <person name="Lloyd D.M."/>
            <person name="Lovell J.D."/>
            <person name="Marsh V.L."/>
            <person name="Martin S.L."/>
            <person name="McConnachie L.J."/>
            <person name="McLay K."/>
            <person name="McMurray A.A."/>
            <person name="Milne S.A."/>
            <person name="Mistry D."/>
            <person name="Moore M.J.F."/>
            <person name="Mullikin J.C."/>
            <person name="Nickerson T."/>
            <person name="Oliver K."/>
            <person name="Parker A."/>
            <person name="Patel R."/>
            <person name="Pearce T.A.V."/>
            <person name="Peck A.I."/>
            <person name="Phillimore B.J.C.T."/>
            <person name="Prathalingam S.R."/>
            <person name="Plumb R.W."/>
            <person name="Ramsay H."/>
            <person name="Rice C.M."/>
            <person name="Ross M.T."/>
            <person name="Scott C.E."/>
            <person name="Sehra H.K."/>
            <person name="Shownkeen R."/>
            <person name="Sims S."/>
            <person name="Skuce C.D."/>
            <person name="Smith M.L."/>
            <person name="Soderlund C."/>
            <person name="Steward C.A."/>
            <person name="Sulston J.E."/>
            <person name="Swann R.M."/>
            <person name="Sycamore N."/>
            <person name="Taylor R."/>
            <person name="Tee L."/>
            <person name="Thomas D.W."/>
            <person name="Thorpe A."/>
            <person name="Tracey A."/>
            <person name="Tromans A.C."/>
            <person name="Vaudin M."/>
            <person name="Wall M."/>
            <person name="Wallis J.M."/>
            <person name="Whitehead S.L."/>
            <person name="Whittaker P."/>
            <person name="Willey D.L."/>
            <person name="Williams L."/>
            <person name="Williams S.A."/>
            <person name="Wilming L."/>
            <person name="Wray P.W."/>
            <person name="Hubbard T."/>
            <person name="Durbin R.M."/>
            <person name="Bentley D.R."/>
            <person name="Beck S."/>
            <person name="Rogers J."/>
        </authorList>
    </citation>
    <scope>NUCLEOTIDE SEQUENCE [LARGE SCALE GENOMIC DNA]</scope>
</reference>
<reference key="6">
    <citation type="submission" date="2005-09" db="EMBL/GenBank/DDBJ databases">
        <authorList>
            <person name="Mural R.J."/>
            <person name="Istrail S."/>
            <person name="Sutton G.G."/>
            <person name="Florea L."/>
            <person name="Halpern A.L."/>
            <person name="Mobarry C.M."/>
            <person name="Lippert R."/>
            <person name="Walenz B."/>
            <person name="Shatkay H."/>
            <person name="Dew I."/>
            <person name="Miller J.R."/>
            <person name="Flanigan M.J."/>
            <person name="Edwards N.J."/>
            <person name="Bolanos R."/>
            <person name="Fasulo D."/>
            <person name="Halldorsson B.V."/>
            <person name="Hannenhalli S."/>
            <person name="Turner R."/>
            <person name="Yooseph S."/>
            <person name="Lu F."/>
            <person name="Nusskern D.R."/>
            <person name="Shue B.C."/>
            <person name="Zheng X.H."/>
            <person name="Zhong F."/>
            <person name="Delcher A.L."/>
            <person name="Huson D.H."/>
            <person name="Kravitz S.A."/>
            <person name="Mouchard L."/>
            <person name="Reinert K."/>
            <person name="Remington K.A."/>
            <person name="Clark A.G."/>
            <person name="Waterman M.S."/>
            <person name="Eichler E.E."/>
            <person name="Adams M.D."/>
            <person name="Hunkapiller M.W."/>
            <person name="Myers E.W."/>
            <person name="Venter J.C."/>
        </authorList>
    </citation>
    <scope>NUCLEOTIDE SEQUENCE [LARGE SCALE GENOMIC DNA]</scope>
    <scope>VARIANT ALA-243</scope>
</reference>
<reference key="7">
    <citation type="journal article" date="2004" name="Genome Res.">
        <title>The status, quality, and expansion of the NIH full-length cDNA project: the Mammalian Gene Collection (MGC).</title>
        <authorList>
            <consortium name="The MGC Project Team"/>
        </authorList>
    </citation>
    <scope>NUCLEOTIDE SEQUENCE [LARGE SCALE MRNA]</scope>
    <scope>VARIANT ALA-243</scope>
    <source>
        <tissue>Lung</tissue>
    </source>
</reference>
<reference key="8">
    <citation type="journal article" date="1991" name="Regul. Pept.">
        <title>Chromogranin B: isolation from pheochromocytoma, N-terminal sequence, tissue distribution and secretory vesicle processing.</title>
        <authorList>
            <person name="Gill B.M."/>
            <person name="Barbosa J.A."/>
            <person name="Dinh T.Q."/>
            <person name="Garrod S."/>
            <person name="O'Connor D.T."/>
        </authorList>
    </citation>
    <scope>PROTEIN SEQUENCE OF 21-48</scope>
</reference>
<reference key="9">
    <citation type="journal article" date="1995" name="Peptides">
        <title>Identification of a new chromogranin B fragment (314-365) in endocrine tumors.</title>
        <authorList>
            <person name="Woussen-Colle M.-C."/>
            <person name="Gourlet P."/>
            <person name="Vandermeers A."/>
            <person name="Vandermeers-Piret M.-C."/>
            <person name="D'Haens J."/>
            <person name="Velkeniers B."/>
            <person name="Robberecht P."/>
        </authorList>
    </citation>
    <scope>PROTEIN SEQUENCE OF 334-385</scope>
</reference>
<reference key="10">
    <citation type="journal article" date="1985" name="Biochem. Biophys. Res. Commun.">
        <title>GAWK, a novel human pituitary polypeptide: isolation, immunocytochemical localization and complete amino acid sequence.</title>
        <authorList>
            <person name="Benjannet S."/>
            <person name="Leduc R."/>
            <person name="Lazure C."/>
            <person name="Seidah N.G."/>
            <person name="Marcinkiewicz M."/>
            <person name="Chretien M."/>
        </authorList>
    </citation>
    <scope>PROTEIN SEQUENCE OF 440-513</scope>
    <source>
        <tissue>Pituitary</tissue>
    </source>
</reference>
<reference key="11">
    <citation type="journal article" date="1987" name="FEBS Lett.">
        <title>Chromogranin B (secretogranin I), a putative precursor of two novel pituitary peptides through processing at paired basic residues.</title>
        <authorList>
            <person name="Benjannet S."/>
            <person name="Leduc R."/>
            <person name="Adrouche N."/>
            <person name="Falgueyret J.P."/>
            <person name="Marcinkiewicz M."/>
            <person name="Seidah N.G."/>
            <person name="Mbikay M."/>
            <person name="Lazure C."/>
            <person name="Chretien M."/>
        </authorList>
    </citation>
    <scope>PROTEIN SEQUENCE OF 617-673</scope>
    <source>
        <tissue>Pituitary</tissue>
    </source>
</reference>
<reference key="12">
    <citation type="journal article" date="2004" name="Proteomics">
        <title>Identification and characterization of phosphorylated proteins in the human pituitary.</title>
        <authorList>
            <person name="Giorgianni F."/>
            <person name="Beranova-Giorgianni S."/>
            <person name="Desiderio D.M."/>
        </authorList>
    </citation>
    <scope>PHOSPHORYLATION AT SER-149 AND SER-405</scope>
    <source>
        <tissue>Pituitary</tissue>
    </source>
</reference>
<reference key="13">
    <citation type="journal article" date="2006" name="Pituitary">
        <title>Phosphoproteomic analysis of the human pituitary.</title>
        <authorList>
            <person name="Beranova-Giorgianni S."/>
            <person name="Zhao Y."/>
            <person name="Desiderio D.M."/>
            <person name="Giorgianni F."/>
        </authorList>
    </citation>
    <scope>PHOSPHORYLATION [LARGE SCALE ANALYSIS] AT SER-149; SER-259; SER-263; SER-311; SER-335; SER-405 AND SER-617</scope>
    <scope>IDENTIFICATION BY MASS SPECTROMETRY [LARGE SCALE ANALYSIS]</scope>
    <source>
        <tissue>Pituitary</tissue>
    </source>
</reference>
<reference key="14">
    <citation type="journal article" date="2013" name="J. Proteome Res.">
        <title>LC-MS/MS characterization of O-glycosylation sites and glycan structures of human cerebrospinal fluid glycoproteins.</title>
        <authorList>
            <person name="Halim A."/>
            <person name="Ruetschi U."/>
            <person name="Larson G."/>
            <person name="Nilsson J."/>
        </authorList>
    </citation>
    <scope>GLYCOSYLATION</scope>
    <scope>IDENTIFICATION BY MASS SPECTROMETRY</scope>
</reference>
<reference key="15">
    <citation type="journal article" date="2014" name="J. Proteomics">
        <title>An enzyme assisted RP-RPLC approach for in-depth analysis of human liver phosphoproteome.</title>
        <authorList>
            <person name="Bian Y."/>
            <person name="Song C."/>
            <person name="Cheng K."/>
            <person name="Dong M."/>
            <person name="Wang F."/>
            <person name="Huang J."/>
            <person name="Sun D."/>
            <person name="Wang L."/>
            <person name="Ye M."/>
            <person name="Zou H."/>
        </authorList>
    </citation>
    <scope>PHOSPHORYLATION [LARGE SCALE ANALYSIS] AT SER-377 AND SER-405</scope>
    <scope>IDENTIFICATION BY MASS SPECTROMETRY [LARGE SCALE ANALYSIS]</scope>
    <source>
        <tissue>Liver</tissue>
    </source>
</reference>
<reference key="16">
    <citation type="journal article" date="2015" name="Cell">
        <title>A single kinase generates the majority of the secreted phosphoproteome.</title>
        <authorList>
            <person name="Tagliabracci V.S."/>
            <person name="Wiley S.E."/>
            <person name="Guo X."/>
            <person name="Kinch L.N."/>
            <person name="Durrant E."/>
            <person name="Wen J."/>
            <person name="Xiao J."/>
            <person name="Cui J."/>
            <person name="Nguyen K.B."/>
            <person name="Engel J.L."/>
            <person name="Coon J.J."/>
            <person name="Grishin N."/>
            <person name="Pinna L.A."/>
            <person name="Pagliarini D.J."/>
            <person name="Dixon J.E."/>
        </authorList>
    </citation>
    <scope>PHOSPHORYLATION AT SER-130; SER-225; SER-367; SER-377; SER-380 AND TYR-401</scope>
</reference>
<reference key="17">
    <citation type="journal article" date="2015" name="Mol. Cell. Proteomics">
        <title>Identification of chondroitin sulfate linkage region glycopeptides reveals prohormones as a novel class of proteoglycans.</title>
        <authorList>
            <person name="Noborn F."/>
            <person name="Gomez Toledo A."/>
            <person name="Sihlbom C."/>
            <person name="Lengqvist J."/>
            <person name="Fries E."/>
            <person name="Kjellen L."/>
            <person name="Nilsson J."/>
            <person name="Larson G."/>
        </authorList>
    </citation>
    <scope>SUBCELLULAR LOCATION</scope>
    <scope>TISSUE SPECIFICITY</scope>
    <scope>GLYCOSYLATION AT SER-93 AND SER-239</scope>
</reference>
<reference key="18">
    <citation type="journal article" date="2023" name="Mol. Cell. Proteomics">
        <title>Mapping the Human Chondroitin Sulfate Glycoproteome Reveals an Unexpected Correlation Between Glycan Sulfation and Attachment Site Characteristics.</title>
        <authorList>
            <person name="Noborn F."/>
            <person name="Nilsson J."/>
            <person name="Sihlbom C."/>
            <person name="Nikpour M."/>
            <person name="Kjellen L."/>
            <person name="Larson G."/>
        </authorList>
    </citation>
    <scope>SUBCELLULAR LOCATION</scope>
    <scope>TISSUE SPECIFICITY</scope>
    <scope>GLYCOSYLATION AT SER-93</scope>
</reference>
<gene>
    <name type="primary">CHGB</name>
    <name type="synonym">SCG1</name>
</gene>
<dbReference type="EMBL" id="Y00064">
    <property type="protein sequence ID" value="CAA68271.1"/>
    <property type="molecule type" value="mRNA"/>
</dbReference>
<dbReference type="EMBL" id="AK289386">
    <property type="protein sequence ID" value="BAF82075.1"/>
    <property type="molecule type" value="mRNA"/>
</dbReference>
<dbReference type="EMBL" id="CR456726">
    <property type="protein sequence ID" value="CAG33007.1"/>
    <property type="molecule type" value="mRNA"/>
</dbReference>
<dbReference type="EMBL" id="AB209712">
    <property type="protein sequence ID" value="BAD92949.1"/>
    <property type="status" value="ALT_INIT"/>
    <property type="molecule type" value="mRNA"/>
</dbReference>
<dbReference type="EMBL" id="AL035461">
    <property type="status" value="NOT_ANNOTATED_CDS"/>
    <property type="molecule type" value="Genomic_DNA"/>
</dbReference>
<dbReference type="EMBL" id="CH471133">
    <property type="protein sequence ID" value="EAX10410.1"/>
    <property type="molecule type" value="Genomic_DNA"/>
</dbReference>
<dbReference type="EMBL" id="BC000375">
    <property type="protein sequence ID" value="AAH00375.1"/>
    <property type="molecule type" value="mRNA"/>
</dbReference>
<dbReference type="CCDS" id="CCDS13092.1"/>
<dbReference type="PIR" id="A29264">
    <property type="entry name" value="CNHUB"/>
</dbReference>
<dbReference type="RefSeq" id="NP_001810.2">
    <property type="nucleotide sequence ID" value="NM_001819.3"/>
</dbReference>
<dbReference type="BioGRID" id="107539">
    <property type="interactions" value="37"/>
</dbReference>
<dbReference type="FunCoup" id="P05060">
    <property type="interactions" value="196"/>
</dbReference>
<dbReference type="IntAct" id="P05060">
    <property type="interactions" value="38"/>
</dbReference>
<dbReference type="MINT" id="P05060"/>
<dbReference type="STRING" id="9606.ENSP00000368244"/>
<dbReference type="TCDB" id="1.A.139.1.1">
    <property type="family name" value="the chromogranin b/secretogranin-1 (cb/s1) family"/>
</dbReference>
<dbReference type="GlyConnect" id="1727">
    <property type="glycosylation" value="1 N-Linked glycan (1 site)"/>
</dbReference>
<dbReference type="GlyCosmos" id="P05060">
    <property type="glycosylation" value="1 site, 1 glycan"/>
</dbReference>
<dbReference type="GlyGen" id="P05060">
    <property type="glycosylation" value="4 sites, 1 N-linked glycan (1 site), 1 O-linked glycan (1 site)"/>
</dbReference>
<dbReference type="iPTMnet" id="P05060"/>
<dbReference type="PhosphoSitePlus" id="P05060"/>
<dbReference type="BioMuta" id="CHGB"/>
<dbReference type="DMDM" id="311033509"/>
<dbReference type="jPOST" id="P05060"/>
<dbReference type="MassIVE" id="P05060"/>
<dbReference type="PaxDb" id="9606-ENSP00000368244"/>
<dbReference type="PeptideAtlas" id="P05060"/>
<dbReference type="ProteomicsDB" id="51772"/>
<dbReference type="Antibodypedia" id="2170">
    <property type="antibodies" value="276 antibodies from 33 providers"/>
</dbReference>
<dbReference type="DNASU" id="1114"/>
<dbReference type="Ensembl" id="ENST00000378961.9">
    <property type="protein sequence ID" value="ENSP00000368244.4"/>
    <property type="gene ID" value="ENSG00000089199.10"/>
</dbReference>
<dbReference type="GeneID" id="1114"/>
<dbReference type="KEGG" id="hsa:1114"/>
<dbReference type="MANE-Select" id="ENST00000378961.9">
    <property type="protein sequence ID" value="ENSP00000368244.4"/>
    <property type="RefSeq nucleotide sequence ID" value="NM_001819.3"/>
    <property type="RefSeq protein sequence ID" value="NP_001810.2"/>
</dbReference>
<dbReference type="UCSC" id="uc002wmg.4">
    <property type="organism name" value="human"/>
</dbReference>
<dbReference type="AGR" id="HGNC:1930"/>
<dbReference type="CTD" id="1114"/>
<dbReference type="DisGeNET" id="1114"/>
<dbReference type="GeneCards" id="CHGB"/>
<dbReference type="HGNC" id="HGNC:1930">
    <property type="gene designation" value="CHGB"/>
</dbReference>
<dbReference type="HPA" id="ENSG00000089199">
    <property type="expression patterns" value="Tissue enhanced (adrenal gland, brain, pituitary gland)"/>
</dbReference>
<dbReference type="MalaCards" id="CHGB"/>
<dbReference type="MIM" id="118920">
    <property type="type" value="gene"/>
</dbReference>
<dbReference type="neXtProt" id="NX_P05060"/>
<dbReference type="OpenTargets" id="ENSG00000089199"/>
<dbReference type="PharmGKB" id="PA26462"/>
<dbReference type="VEuPathDB" id="HostDB:ENSG00000089199"/>
<dbReference type="eggNOG" id="ENOG502QRBF">
    <property type="taxonomic scope" value="Eukaryota"/>
</dbReference>
<dbReference type="GeneTree" id="ENSGT00940000154206"/>
<dbReference type="HOGENOM" id="CLU_026095_0_0_1"/>
<dbReference type="InParanoid" id="P05060"/>
<dbReference type="OMA" id="RPGHKHQ"/>
<dbReference type="OrthoDB" id="9907623at2759"/>
<dbReference type="PAN-GO" id="P05060">
    <property type="GO annotations" value="2 GO annotations based on evolutionary models"/>
</dbReference>
<dbReference type="PhylomeDB" id="P05060"/>
<dbReference type="TreeFam" id="TF336596"/>
<dbReference type="PathwayCommons" id="P05060"/>
<dbReference type="Reactome" id="R-HSA-381426">
    <property type="pathway name" value="Regulation of Insulin-like Growth Factor (IGF) transport and uptake by Insulin-like Growth Factor Binding Proteins (IGFBPs)"/>
</dbReference>
<dbReference type="Reactome" id="R-HSA-8957275">
    <property type="pathway name" value="Post-translational protein phosphorylation"/>
</dbReference>
<dbReference type="SignaLink" id="P05060"/>
<dbReference type="BioGRID-ORCS" id="1114">
    <property type="hits" value="15 hits in 1150 CRISPR screens"/>
</dbReference>
<dbReference type="ChiTaRS" id="CHGB">
    <property type="organism name" value="human"/>
</dbReference>
<dbReference type="GeneWiki" id="Secretoneurin"/>
<dbReference type="GenomeRNAi" id="1114"/>
<dbReference type="Pharos" id="P05060">
    <property type="development level" value="Tbio"/>
</dbReference>
<dbReference type="PRO" id="PR:P05060"/>
<dbReference type="Proteomes" id="UP000005640">
    <property type="component" value="Chromosome 20"/>
</dbReference>
<dbReference type="RNAct" id="P05060">
    <property type="molecule type" value="protein"/>
</dbReference>
<dbReference type="Bgee" id="ENSG00000089199">
    <property type="expression patterns" value="Expressed in paraflocculus and 142 other cell types or tissues"/>
</dbReference>
<dbReference type="ExpressionAtlas" id="P05060">
    <property type="expression patterns" value="baseline and differential"/>
</dbReference>
<dbReference type="GO" id="GO:0005788">
    <property type="term" value="C:endoplasmic reticulum lumen"/>
    <property type="evidence" value="ECO:0000304"/>
    <property type="project" value="Reactome"/>
</dbReference>
<dbReference type="GO" id="GO:0005615">
    <property type="term" value="C:extracellular space"/>
    <property type="evidence" value="ECO:0000318"/>
    <property type="project" value="GO_Central"/>
</dbReference>
<dbReference type="GO" id="GO:0030141">
    <property type="term" value="C:secretory granule"/>
    <property type="evidence" value="ECO:0000250"/>
    <property type="project" value="UniProtKB"/>
</dbReference>
<dbReference type="GO" id="GO:0005179">
    <property type="term" value="F:hormone activity"/>
    <property type="evidence" value="ECO:0000304"/>
    <property type="project" value="ProtInc"/>
</dbReference>
<dbReference type="InterPro" id="IPR001819">
    <property type="entry name" value="Chromogranin_AB"/>
</dbReference>
<dbReference type="InterPro" id="IPR018054">
    <property type="entry name" value="Chromogranin_CS"/>
</dbReference>
<dbReference type="InterPro" id="IPR001990">
    <property type="entry name" value="Granin"/>
</dbReference>
<dbReference type="PANTHER" id="PTHR10583">
    <property type="entry name" value="CHROMOGRANIN"/>
    <property type="match status" value="1"/>
</dbReference>
<dbReference type="PANTHER" id="PTHR10583:SF4">
    <property type="entry name" value="SECRETOGRANIN-1"/>
    <property type="match status" value="1"/>
</dbReference>
<dbReference type="Pfam" id="PF01271">
    <property type="entry name" value="Granin"/>
    <property type="match status" value="1"/>
</dbReference>
<dbReference type="PRINTS" id="PR00659">
    <property type="entry name" value="CHROMOGRANIN"/>
</dbReference>
<dbReference type="PROSITE" id="PS00422">
    <property type="entry name" value="GRANINS_1"/>
    <property type="match status" value="1"/>
</dbReference>
<dbReference type="PROSITE" id="PS00423">
    <property type="entry name" value="GRANINS_2"/>
    <property type="match status" value="1"/>
</dbReference>
<accession>P05060</accession>
<accession>A8K021</accession>
<accession>Q59EU9</accession>
<accession>Q6IBS6</accession>
<accession>Q9BQV6</accession>
<accession>Q9UC25</accession>
<accession>Q9UJA6</accession>
<protein>
    <recommendedName>
        <fullName>Secretogranin-1</fullName>
    </recommendedName>
    <alternativeName>
        <fullName>Chromogranin-B</fullName>
        <shortName>CgB</shortName>
    </alternativeName>
    <alternativeName>
        <fullName>Secretogranin I</fullName>
        <shortName>SgI</shortName>
    </alternativeName>
    <component>
        <recommendedName>
            <fullName>PE-11</fullName>
        </recommendedName>
    </component>
    <component>
        <recommendedName>
            <fullName>GAWK peptide</fullName>
        </recommendedName>
    </component>
    <component>
        <recommendedName>
            <fullName>CCB peptide</fullName>
        </recommendedName>
    </component>
</protein>
<comment type="function">
    <text>Secretogranin-1 is a neuroendocrine secretory granule protein, which may be the precursor for other biologically active peptides.</text>
</comment>
<comment type="subunit">
    <text evidence="4">Interacts with ITPR1 in the secretory granules.</text>
</comment>
<comment type="interaction">
    <interactant intactId="EBI-712619">
        <id>P05060</id>
    </interactant>
    <interactant intactId="EBI-7147442">
        <id>Q8IXL6</id>
        <label>FAM20C</label>
    </interactant>
    <organismsDiffer>false</organismsDiffer>
    <experiments>2</experiments>
</comment>
<comment type="interaction">
    <interactant intactId="EBI-712619">
        <id>P05060</id>
    </interactant>
    <interactant intactId="EBI-5323863">
        <id>Q5S007</id>
        <label>LRRK2</label>
    </interactant>
    <organismsDiffer>false</organismsDiffer>
    <experiments>3</experiments>
</comment>
<comment type="interaction">
    <interactant intactId="EBI-712619">
        <id>P05060</id>
    </interactant>
    <interactant intactId="EBI-1040141">
        <id>Q15796</id>
        <label>SMAD2</label>
    </interactant>
    <organismsDiffer>false</organismsDiffer>
    <experiments>2</experiments>
</comment>
<comment type="subcellular location">
    <subcellularLocation>
        <location evidence="12 15">Secreted</location>
    </subcellularLocation>
    <text>Neuroendocrine and endocrine secretory granules.</text>
</comment>
<comment type="tissue specificity">
    <text evidence="12 14">Detected in cerebrospinal fluid and urine (at protein level) (PubMed:25326458, PubMed:37453717). Expressed in the adrenal medulla, and in pheochromocytoma. Not expressed in liver.</text>
</comment>
<comment type="PTM">
    <text evidence="1">Extensively processed by limited proteolysis at conserved basic residues. Alternative processing are seen in different tissues (By similarity).</text>
</comment>
<comment type="PTM">
    <text evidence="11 12">O-glycosylated.</text>
</comment>
<comment type="similarity">
    <text evidence="19">Belongs to the chromogranin/secretogranin protein family.</text>
</comment>
<comment type="sequence caution" evidence="19">
    <conflict type="erroneous initiation">
        <sequence resource="EMBL-CDS" id="BAD92949"/>
    </conflict>
    <text>Extended N-terminus.</text>
</comment>
<evidence type="ECO:0000250" key="1"/>
<evidence type="ECO:0000250" key="2">
    <source>
        <dbReference type="UniProtKB" id="O35314"/>
    </source>
</evidence>
<evidence type="ECO:0000250" key="3">
    <source>
        <dbReference type="UniProtKB" id="P16014"/>
    </source>
</evidence>
<evidence type="ECO:0000250" key="4">
    <source>
        <dbReference type="UniProtKB" id="P23389"/>
    </source>
</evidence>
<evidence type="ECO:0000255" key="5"/>
<evidence type="ECO:0000256" key="6">
    <source>
        <dbReference type="SAM" id="MobiDB-lite"/>
    </source>
</evidence>
<evidence type="ECO:0000269" key="7">
    <source>
    </source>
</evidence>
<evidence type="ECO:0000269" key="8">
    <source>
    </source>
</evidence>
<evidence type="ECO:0000269" key="9">
    <source>
    </source>
</evidence>
<evidence type="ECO:0000269" key="10">
    <source>
    </source>
</evidence>
<evidence type="ECO:0000269" key="11">
    <source>
    </source>
</evidence>
<evidence type="ECO:0000269" key="12">
    <source>
    </source>
</evidence>
<evidence type="ECO:0000269" key="13">
    <source>
    </source>
</evidence>
<evidence type="ECO:0000269" key="14">
    <source>
    </source>
</evidence>
<evidence type="ECO:0000269" key="15">
    <source>
    </source>
</evidence>
<evidence type="ECO:0000269" key="16">
    <source ref="3"/>
</evidence>
<evidence type="ECO:0000269" key="17">
    <source ref="4"/>
</evidence>
<evidence type="ECO:0000269" key="18">
    <source ref="6"/>
</evidence>
<evidence type="ECO:0000305" key="19"/>
<evidence type="ECO:0007744" key="20">
    <source>
    </source>
</evidence>
<evidence type="ECO:0007744" key="21">
    <source>
    </source>
</evidence>
<organism>
    <name type="scientific">Homo sapiens</name>
    <name type="common">Human</name>
    <dbReference type="NCBI Taxonomy" id="9606"/>
    <lineage>
        <taxon>Eukaryota</taxon>
        <taxon>Metazoa</taxon>
        <taxon>Chordata</taxon>
        <taxon>Craniata</taxon>
        <taxon>Vertebrata</taxon>
        <taxon>Euteleostomi</taxon>
        <taxon>Mammalia</taxon>
        <taxon>Eutheria</taxon>
        <taxon>Euarchontoglires</taxon>
        <taxon>Primates</taxon>
        <taxon>Haplorrhini</taxon>
        <taxon>Catarrhini</taxon>
        <taxon>Hominidae</taxon>
        <taxon>Homo</taxon>
    </lineage>
</organism>
<proteinExistence type="evidence at protein level"/>
<feature type="signal peptide" evidence="10 14">
    <location>
        <begin position="1"/>
        <end position="20"/>
    </location>
</feature>
<feature type="chain" id="PRO_0000005438" description="Secretogranin-1">
    <location>
        <begin position="21"/>
        <end position="677"/>
    </location>
</feature>
<feature type="peptide" id="PRO_0000005439" description="GAWK peptide">
    <location>
        <begin position="440"/>
        <end position="513"/>
    </location>
</feature>
<feature type="peptide" id="PRO_0000432730" description="PE-11" evidence="3">
    <location>
        <begin position="575"/>
        <end position="585"/>
    </location>
</feature>
<feature type="peptide" id="PRO_0000005440" description="CCB peptide">
    <location>
        <begin position="617"/>
        <end position="673"/>
    </location>
</feature>
<feature type="region of interest" description="Disordered" evidence="6">
    <location>
        <begin position="64"/>
        <end position="463"/>
    </location>
</feature>
<feature type="region of interest" description="O-glycosylated at one site">
    <location>
        <begin position="116"/>
        <end position="120"/>
    </location>
</feature>
<feature type="region of interest" description="Disordered" evidence="6">
    <location>
        <begin position="475"/>
        <end position="512"/>
    </location>
</feature>
<feature type="region of interest" description="Disordered" evidence="6">
    <location>
        <begin position="622"/>
        <end position="653"/>
    </location>
</feature>
<feature type="compositionally biased region" description="Basic and acidic residues" evidence="6">
    <location>
        <begin position="64"/>
        <end position="100"/>
    </location>
</feature>
<feature type="compositionally biased region" description="Basic and acidic residues" evidence="6">
    <location>
        <begin position="118"/>
        <end position="136"/>
    </location>
</feature>
<feature type="compositionally biased region" description="Basic and acidic residues" evidence="6">
    <location>
        <begin position="150"/>
        <end position="162"/>
    </location>
</feature>
<feature type="compositionally biased region" description="Basic and acidic residues" evidence="6">
    <location>
        <begin position="172"/>
        <end position="190"/>
    </location>
</feature>
<feature type="compositionally biased region" description="Basic and acidic residues" evidence="6">
    <location>
        <begin position="200"/>
        <end position="236"/>
    </location>
</feature>
<feature type="compositionally biased region" description="Acidic residues" evidence="6">
    <location>
        <begin position="262"/>
        <end position="272"/>
    </location>
</feature>
<feature type="compositionally biased region" description="Basic residues" evidence="6">
    <location>
        <begin position="277"/>
        <end position="287"/>
    </location>
</feature>
<feature type="compositionally biased region" description="Basic and acidic residues" evidence="6">
    <location>
        <begin position="359"/>
        <end position="372"/>
    </location>
</feature>
<feature type="compositionally biased region" description="Basic and acidic residues" evidence="6">
    <location>
        <begin position="384"/>
        <end position="415"/>
    </location>
</feature>
<feature type="compositionally biased region" description="Basic and acidic residues" evidence="6">
    <location>
        <begin position="433"/>
        <end position="455"/>
    </location>
</feature>
<feature type="compositionally biased region" description="Basic and acidic residues" evidence="6">
    <location>
        <begin position="490"/>
        <end position="503"/>
    </location>
</feature>
<feature type="compositionally biased region" description="Basic and acidic residues" evidence="6">
    <location>
        <begin position="634"/>
        <end position="653"/>
    </location>
</feature>
<feature type="modified residue" description="Phosphothreonine" evidence="19">
    <location>
        <position position="79"/>
    </location>
</feature>
<feature type="modified residue" description="Phosphoserine" evidence="2">
    <location>
        <position position="93"/>
    </location>
</feature>
<feature type="modified residue" description="Phosphoserine" evidence="5">
    <location>
        <position position="99"/>
    </location>
</feature>
<feature type="modified residue" description="Phosphoserine" evidence="5">
    <location>
        <position position="100"/>
    </location>
</feature>
<feature type="modified residue" description="Phosphoserine; by FAM20C" evidence="13">
    <location>
        <position position="130"/>
    </location>
</feature>
<feature type="modified residue" description="Phosphoserine" evidence="8 20">
    <location>
        <position position="149"/>
    </location>
</feature>
<feature type="modified residue" description="Phosphoserine" evidence="4">
    <location>
        <position position="183"/>
    </location>
</feature>
<feature type="modified residue" description="Phosphoserine; by FAM20C" evidence="13">
    <location>
        <position position="225"/>
    </location>
</feature>
<feature type="modified residue" description="Phosphoserine" evidence="20">
    <location>
        <position position="259"/>
    </location>
</feature>
<feature type="modified residue" description="Phosphoserine" evidence="20">
    <location>
        <position position="263"/>
    </location>
</feature>
<feature type="modified residue" description="Phosphoserine" evidence="5">
    <location>
        <position position="293"/>
    </location>
</feature>
<feature type="modified residue" description="Phosphoserine" evidence="5">
    <location>
        <position position="294"/>
    </location>
</feature>
<feature type="modified residue" description="Phosphoserine" evidence="20">
    <location>
        <position position="311"/>
    </location>
</feature>
<feature type="modified residue" description="Phosphoserine" evidence="20">
    <location>
        <position position="335"/>
    </location>
</feature>
<feature type="modified residue" description="Sulfotyrosine" evidence="2">
    <location>
        <position position="341"/>
    </location>
</feature>
<feature type="modified residue" description="Phosphoserine; by FAM20C" evidence="13">
    <location>
        <position position="367"/>
    </location>
</feature>
<feature type="modified residue" description="Phosphoserine; by FAM20C" evidence="13 21">
    <location>
        <position position="377"/>
    </location>
</feature>
<feature type="modified residue" description="Phosphoserine; by FAM20C" evidence="13">
    <location>
        <position position="380"/>
    </location>
</feature>
<feature type="modified residue" description="Phosphotyrosine" evidence="13">
    <location>
        <position position="401"/>
    </location>
</feature>
<feature type="modified residue" description="Phosphoserine" evidence="8 20 21">
    <location>
        <position position="405"/>
    </location>
</feature>
<feature type="modified residue" description="Sulfotyrosine" evidence="4">
    <location>
        <position position="474"/>
    </location>
</feature>
<feature type="modified residue" description="Phosphoserine" evidence="5">
    <location>
        <position position="533"/>
    </location>
</feature>
<feature type="modified residue" description="Phosphoserine" evidence="5">
    <location>
        <position position="534"/>
    </location>
</feature>
<feature type="modified residue" description="Sulfotyrosine" evidence="4">
    <location>
        <position position="566"/>
    </location>
</feature>
<feature type="modified residue" description="Phosphoserine" evidence="20">
    <location>
        <position position="617"/>
    </location>
</feature>
<feature type="modified residue" description="Sulfotyrosine" evidence="2">
    <location>
        <position position="624"/>
    </location>
</feature>
<feature type="modified residue" description="Phosphoserine" evidence="4">
    <location>
        <position position="626"/>
    </location>
</feature>
<feature type="modified residue" description="Phosphoserine" evidence="4">
    <location>
        <position position="631"/>
    </location>
</feature>
<feature type="glycosylation site" description="O-linked (Xyl...) (chondroitin sulfate) serine" evidence="12 15">
    <location>
        <position position="93"/>
    </location>
</feature>
<feature type="glycosylation site" description="O-linked (Xyl...) (chondroitin sulfate) serine" evidence="12">
    <location>
        <position position="239"/>
    </location>
</feature>
<feature type="disulfide bond">
    <location>
        <begin position="36"/>
        <end position="57"/>
    </location>
</feature>
<feature type="sequence variant" id="VAR_043578" description="In dbSNP:rs6085324." evidence="7 17">
    <original>S</original>
    <variation>T</variation>
    <location>
        <position position="93"/>
    </location>
</feature>
<feature type="sequence variant" id="VAR_024414" description="In dbSNP:rs236150.">
    <original>K</original>
    <variation>N</variation>
    <location>
        <position position="117"/>
    </location>
</feature>
<feature type="sequence variant" id="VAR_028235" description="In dbSNP:rs6133278.">
    <original>D</original>
    <variation>N</variation>
    <location>
        <position position="145"/>
    </location>
</feature>
<feature type="sequence variant" id="VAR_020287" description="In dbSNP:rs910122." evidence="7 17">
    <original>R</original>
    <variation>Q</variation>
    <location>
        <position position="178"/>
    </location>
</feature>
<feature type="sequence variant" id="VAR_028236" description="In dbSNP:rs881118.">
    <original>N</original>
    <variation>H</variation>
    <location>
        <position position="200"/>
    </location>
</feature>
<feature type="sequence variant" id="VAR_028237" description="In dbSNP:rs6139873.">
    <original>R</original>
    <variation>Q</variation>
    <location>
        <position position="232"/>
    </location>
</feature>
<feature type="sequence variant" id="VAR_024415" description="In dbSNP:rs236151." evidence="7 9 14 16 17 18">
    <original>T</original>
    <variation>A</variation>
    <location>
        <position position="243"/>
    </location>
</feature>
<feature type="sequence variant" id="VAR_024416" description="In dbSNP:rs236152." evidence="7 17">
    <original>A</original>
    <variation>G</variation>
    <location>
        <position position="353"/>
    </location>
</feature>
<feature type="sequence variant" id="VAR_028238" description="In dbSNP:rs742710.">
    <original>P</original>
    <variation>L</variation>
    <location>
        <position position="413"/>
    </location>
</feature>
<feature type="sequence variant" id="VAR_022012" description="In dbSNP:rs742711." evidence="7 17">
    <original>R</original>
    <variation>H</variation>
    <location>
        <position position="417"/>
    </location>
</feature>
<feature type="sequence conflict" description="In Ref. 2; BAF82075." evidence="19" ref="2">
    <original>D</original>
    <variation>E</variation>
    <location>
        <position position="24"/>
    </location>
</feature>
<keyword id="KW-0165">Cleavage on pair of basic residues</keyword>
<keyword id="KW-0903">Direct protein sequencing</keyword>
<keyword id="KW-1015">Disulfide bond</keyword>
<keyword id="KW-0325">Glycoprotein</keyword>
<keyword id="KW-0597">Phosphoprotein</keyword>
<keyword id="KW-0654">Proteoglycan</keyword>
<keyword id="KW-1267">Proteomics identification</keyword>
<keyword id="KW-1185">Reference proteome</keyword>
<keyword id="KW-0964">Secreted</keyword>
<keyword id="KW-0732">Signal</keyword>
<keyword id="KW-0765">Sulfation</keyword>